<protein>
    <recommendedName>
        <fullName evidence="1">Gamma-aminobutyraldehyde dehydrogenase</fullName>
        <shortName evidence="1">ABALDH</shortName>
        <ecNumber evidence="1">1.2.1.19</ecNumber>
    </recommendedName>
    <alternativeName>
        <fullName evidence="1">1-pyrroline dehydrogenase</fullName>
    </alternativeName>
    <alternativeName>
        <fullName evidence="1">4-aminobutanal dehydrogenase</fullName>
    </alternativeName>
    <alternativeName>
        <fullName evidence="1">5-aminopentanal dehydrogenase</fullName>
        <ecNumber evidence="1">1.2.1.-</ecNumber>
    </alternativeName>
</protein>
<sequence length="474" mass="50900">MQHKLLINGELVSGEGEKQPVYNPATGDVLLEIAEASAEQVDAAVRAADAAFAEWGQTTPKVRAECLLKLADVIEENGQVFAELESRNCGKPLHSAFNDEIPAIVDVFRFFAGAARCLNGLAAGEYLEGHTSMIRRDPLGVVASIAPWNYPLMMAAWKLAPALAAGNCVVLKPSEITPLTALKLAELAKDIFPAGVINVLFGRGKTVGDPLTGHPKVRMVSLTGSIATGEHIISHTAPSIKRTHMELGGKAPVIVFDDADIEAVVEGVRTFGYYNAGQDCTVACRIYAQKGIYDTLVEKLGAAVATLKSGAPDDESTELGPLSSLAHLERVSKAVEEAKATGHIKVITGGEKRKGNGYYYAPTLLAGALQDDAIVQKEVFGPVVSVTLFDNEEQVVNWANDSQYGLASSVWTKDVGRAHRVSARLQYGCTWVNTHFMLVSEMPHGGQKLSGYGKDMSLYGLEDYTVVRHVMVKH</sequence>
<comment type="function">
    <text evidence="1">Catalyzes the oxidation 4-aminobutanal (gamma-aminobutyraldehyde) to 4-aminobutanoate (gamma-aminobutyrate or GABA). This is the second step in one of two pathways for putrescine degradation, where putrescine is converted into 4-aminobutanoate via 4-aminobutanal. Also functions as a 5-aminopentanal dehydrogenase in a a L-lysine degradation pathway to succinate that proceeds via cadaverine, glutarate and L-2-hydroxyglutarate.</text>
</comment>
<comment type="catalytic activity">
    <reaction evidence="1">
        <text>4-aminobutanal + NAD(+) + H2O = 4-aminobutanoate + NADH + 2 H(+)</text>
        <dbReference type="Rhea" id="RHEA:19105"/>
        <dbReference type="ChEBI" id="CHEBI:15377"/>
        <dbReference type="ChEBI" id="CHEBI:15378"/>
        <dbReference type="ChEBI" id="CHEBI:57540"/>
        <dbReference type="ChEBI" id="CHEBI:57945"/>
        <dbReference type="ChEBI" id="CHEBI:58264"/>
        <dbReference type="ChEBI" id="CHEBI:59888"/>
        <dbReference type="EC" id="1.2.1.19"/>
    </reaction>
    <physiologicalReaction direction="left-to-right" evidence="1">
        <dbReference type="Rhea" id="RHEA:19106"/>
    </physiologicalReaction>
</comment>
<comment type="catalytic activity">
    <reaction evidence="1">
        <text>5-aminopentanal + NAD(+) + H2O = 5-aminopentanoate + NADH + 2 H(+)</text>
        <dbReference type="Rhea" id="RHEA:61632"/>
        <dbReference type="ChEBI" id="CHEBI:15377"/>
        <dbReference type="ChEBI" id="CHEBI:15378"/>
        <dbReference type="ChEBI" id="CHEBI:57540"/>
        <dbReference type="ChEBI" id="CHEBI:57945"/>
        <dbReference type="ChEBI" id="CHEBI:144896"/>
        <dbReference type="ChEBI" id="CHEBI:356010"/>
    </reaction>
    <physiologicalReaction direction="left-to-right" evidence="1">
        <dbReference type="Rhea" id="RHEA:61633"/>
    </physiologicalReaction>
</comment>
<comment type="pathway">
    <text evidence="1">Amine and polyamine degradation; putrescine degradation; 4-aminobutanoate from 4-aminobutanal: step 1/1.</text>
</comment>
<comment type="pathway">
    <text evidence="1">Amino-acid degradation.</text>
</comment>
<comment type="subunit">
    <text evidence="1">Homotetramer.</text>
</comment>
<comment type="miscellaneous">
    <text evidence="1">4-aminobutanal can spontaneously cyclize to 1-pyrroline, and 5-aminopentanal to 1-piperideine.</text>
</comment>
<comment type="similarity">
    <text evidence="1">Belongs to the aldehyde dehydrogenase family. Gamma-aminobutyraldehyde dehydrogenase subfamily.</text>
</comment>
<feature type="chain" id="PRO_1000140269" description="Gamma-aminobutyraldehyde dehydrogenase">
    <location>
        <begin position="1"/>
        <end position="474"/>
    </location>
</feature>
<feature type="active site" evidence="1">
    <location>
        <position position="246"/>
    </location>
</feature>
<feature type="active site" description="Nucleophile" evidence="1">
    <location>
        <position position="280"/>
    </location>
</feature>
<feature type="binding site" evidence="1">
    <location>
        <begin position="146"/>
        <end position="148"/>
    </location>
    <ligand>
        <name>NAD(+)</name>
        <dbReference type="ChEBI" id="CHEBI:57540"/>
    </ligand>
</feature>
<feature type="binding site" evidence="1">
    <location>
        <begin position="172"/>
        <end position="175"/>
    </location>
    <ligand>
        <name>NAD(+)</name>
        <dbReference type="ChEBI" id="CHEBI:57540"/>
    </ligand>
</feature>
<feature type="binding site" evidence="1">
    <location>
        <position position="209"/>
    </location>
    <ligand>
        <name>NAD(+)</name>
        <dbReference type="ChEBI" id="CHEBI:57540"/>
    </ligand>
</feature>
<feature type="binding site" evidence="1">
    <location>
        <begin position="225"/>
        <end position="228"/>
    </location>
    <ligand>
        <name>NAD(+)</name>
        <dbReference type="ChEBI" id="CHEBI:57540"/>
    </ligand>
</feature>
<feature type="binding site" evidence="1">
    <location>
        <position position="280"/>
    </location>
    <ligand>
        <name>NAD(+)</name>
        <dbReference type="ChEBI" id="CHEBI:57540"/>
    </ligand>
</feature>
<proteinExistence type="inferred from homology"/>
<evidence type="ECO:0000255" key="1">
    <source>
        <dbReference type="HAMAP-Rule" id="MF_01275"/>
    </source>
</evidence>
<keyword id="KW-0520">NAD</keyword>
<keyword id="KW-0560">Oxidoreductase</keyword>
<accession>B5Z0W0</accession>
<reference key="1">
    <citation type="journal article" date="2011" name="Proc. Natl. Acad. Sci. U.S.A.">
        <title>Genomic anatomy of Escherichia coli O157:H7 outbreaks.</title>
        <authorList>
            <person name="Eppinger M."/>
            <person name="Mammel M.K."/>
            <person name="Leclerc J.E."/>
            <person name="Ravel J."/>
            <person name="Cebula T.A."/>
        </authorList>
    </citation>
    <scope>NUCLEOTIDE SEQUENCE [LARGE SCALE GENOMIC DNA]</scope>
    <source>
        <strain>EC4115 / EHEC</strain>
    </source>
</reference>
<dbReference type="EC" id="1.2.1.19" evidence="1"/>
<dbReference type="EC" id="1.2.1.-" evidence="1"/>
<dbReference type="EMBL" id="CP001164">
    <property type="protein sequence ID" value="ACI38546.1"/>
    <property type="molecule type" value="Genomic_DNA"/>
</dbReference>
<dbReference type="RefSeq" id="WP_001163885.1">
    <property type="nucleotide sequence ID" value="NC_011353.1"/>
</dbReference>
<dbReference type="SMR" id="B5Z0W0"/>
<dbReference type="KEGG" id="ecf:ECH74115_2050"/>
<dbReference type="HOGENOM" id="CLU_005391_0_0_6"/>
<dbReference type="UniPathway" id="UPA00188">
    <property type="reaction ID" value="UER00292"/>
</dbReference>
<dbReference type="GO" id="GO:0019145">
    <property type="term" value="F:aminobutyraldehyde dehydrogenase (NAD+) activity"/>
    <property type="evidence" value="ECO:0007669"/>
    <property type="project" value="UniProtKB-UniRule"/>
</dbReference>
<dbReference type="GO" id="GO:0051287">
    <property type="term" value="F:NAD binding"/>
    <property type="evidence" value="ECO:0007669"/>
    <property type="project" value="UniProtKB-UniRule"/>
</dbReference>
<dbReference type="GO" id="GO:0019477">
    <property type="term" value="P:L-lysine catabolic process"/>
    <property type="evidence" value="ECO:0007669"/>
    <property type="project" value="UniProtKB-UniRule"/>
</dbReference>
<dbReference type="GO" id="GO:0009447">
    <property type="term" value="P:putrescine catabolic process"/>
    <property type="evidence" value="ECO:0007669"/>
    <property type="project" value="UniProtKB-UniRule"/>
</dbReference>
<dbReference type="CDD" id="cd07092">
    <property type="entry name" value="ALDH_ABALDH-YdcW"/>
    <property type="match status" value="1"/>
</dbReference>
<dbReference type="FunFam" id="3.40.605.10:FF:000001">
    <property type="entry name" value="Aldehyde dehydrogenase 1"/>
    <property type="match status" value="1"/>
</dbReference>
<dbReference type="FunFam" id="3.40.309.10:FF:000010">
    <property type="entry name" value="Gamma-aminobutyraldehyde dehydrogenase"/>
    <property type="match status" value="1"/>
</dbReference>
<dbReference type="Gene3D" id="3.40.605.10">
    <property type="entry name" value="Aldehyde Dehydrogenase, Chain A, domain 1"/>
    <property type="match status" value="1"/>
</dbReference>
<dbReference type="Gene3D" id="3.40.309.10">
    <property type="entry name" value="Aldehyde Dehydrogenase, Chain A, domain 2"/>
    <property type="match status" value="1"/>
</dbReference>
<dbReference type="HAMAP" id="MF_01275">
    <property type="entry name" value="Aldedh_Prr"/>
    <property type="match status" value="1"/>
</dbReference>
<dbReference type="InterPro" id="IPR016161">
    <property type="entry name" value="Ald_DH/histidinol_DH"/>
</dbReference>
<dbReference type="InterPro" id="IPR016163">
    <property type="entry name" value="Ald_DH_C"/>
</dbReference>
<dbReference type="InterPro" id="IPR029510">
    <property type="entry name" value="Ald_DH_CS_GLU"/>
</dbReference>
<dbReference type="InterPro" id="IPR016162">
    <property type="entry name" value="Ald_DH_N"/>
</dbReference>
<dbReference type="InterPro" id="IPR015590">
    <property type="entry name" value="Aldehyde_DH_dom"/>
</dbReference>
<dbReference type="InterPro" id="IPR015657">
    <property type="entry name" value="Aminobutyraldehyde_DH"/>
</dbReference>
<dbReference type="InterPro" id="IPR017749">
    <property type="entry name" value="PatD"/>
</dbReference>
<dbReference type="NCBIfam" id="TIGR03374">
    <property type="entry name" value="ABALDH"/>
    <property type="match status" value="1"/>
</dbReference>
<dbReference type="NCBIfam" id="NF010000">
    <property type="entry name" value="PRK13473.1"/>
    <property type="match status" value="1"/>
</dbReference>
<dbReference type="PANTHER" id="PTHR11699">
    <property type="entry name" value="ALDEHYDE DEHYDROGENASE-RELATED"/>
    <property type="match status" value="1"/>
</dbReference>
<dbReference type="Pfam" id="PF00171">
    <property type="entry name" value="Aldedh"/>
    <property type="match status" value="1"/>
</dbReference>
<dbReference type="SUPFAM" id="SSF53720">
    <property type="entry name" value="ALDH-like"/>
    <property type="match status" value="1"/>
</dbReference>
<dbReference type="PROSITE" id="PS00687">
    <property type="entry name" value="ALDEHYDE_DEHYDR_GLU"/>
    <property type="match status" value="1"/>
</dbReference>
<organism>
    <name type="scientific">Escherichia coli O157:H7 (strain EC4115 / EHEC)</name>
    <dbReference type="NCBI Taxonomy" id="444450"/>
    <lineage>
        <taxon>Bacteria</taxon>
        <taxon>Pseudomonadati</taxon>
        <taxon>Pseudomonadota</taxon>
        <taxon>Gammaproteobacteria</taxon>
        <taxon>Enterobacterales</taxon>
        <taxon>Enterobacteriaceae</taxon>
        <taxon>Escherichia</taxon>
    </lineage>
</organism>
<name>ABDH_ECO5E</name>
<gene>
    <name evidence="1" type="primary">patD</name>
    <name type="ordered locus">ECH74115_2050</name>
</gene>